<dbReference type="EMBL" id="CP017623">
    <property type="protein sequence ID" value="AOW25774.1"/>
    <property type="molecule type" value="Genomic_DNA"/>
</dbReference>
<dbReference type="RefSeq" id="XP_718991.1">
    <property type="nucleotide sequence ID" value="XM_713898.2"/>
</dbReference>
<dbReference type="FunCoup" id="Q5ABP8">
    <property type="interactions" value="31"/>
</dbReference>
<dbReference type="STRING" id="237561.Q5ABP8"/>
<dbReference type="GlyCosmos" id="Q5ABP8">
    <property type="glycosylation" value="2 sites, No reported glycans"/>
</dbReference>
<dbReference type="EnsemblFungi" id="C1_00770C_A-T">
    <property type="protein sequence ID" value="C1_00770C_A-T-p1"/>
    <property type="gene ID" value="C1_00770C_A"/>
</dbReference>
<dbReference type="GeneID" id="3639350"/>
<dbReference type="KEGG" id="cal:CAALFM_C100770CA"/>
<dbReference type="CGD" id="CAL0000184365">
    <property type="gene designation" value="ROT1"/>
</dbReference>
<dbReference type="VEuPathDB" id="FungiDB:C1_00770C_A"/>
<dbReference type="eggNOG" id="ENOG502QQTG">
    <property type="taxonomic scope" value="Eukaryota"/>
</dbReference>
<dbReference type="HOGENOM" id="CLU_071622_0_0_1"/>
<dbReference type="InParanoid" id="Q5ABP8"/>
<dbReference type="OMA" id="YKPPQML"/>
<dbReference type="OrthoDB" id="5327821at2759"/>
<dbReference type="PRO" id="PR:Q5ABP8"/>
<dbReference type="Proteomes" id="UP000000559">
    <property type="component" value="Chromosome 1"/>
</dbReference>
<dbReference type="GO" id="GO:0005789">
    <property type="term" value="C:endoplasmic reticulum membrane"/>
    <property type="evidence" value="ECO:0000318"/>
    <property type="project" value="GO_Central"/>
</dbReference>
<dbReference type="GO" id="GO:0051082">
    <property type="term" value="F:unfolded protein binding"/>
    <property type="evidence" value="ECO:0000318"/>
    <property type="project" value="GO_Central"/>
</dbReference>
<dbReference type="GO" id="GO:0006458">
    <property type="term" value="P:'de novo' protein folding"/>
    <property type="evidence" value="ECO:0000318"/>
    <property type="project" value="GO_Central"/>
</dbReference>
<dbReference type="GO" id="GO:0007118">
    <property type="term" value="P:budding cell apical bud growth"/>
    <property type="evidence" value="ECO:0000318"/>
    <property type="project" value="GO_Central"/>
</dbReference>
<dbReference type="InterPro" id="IPR019623">
    <property type="entry name" value="Rot1"/>
</dbReference>
<dbReference type="PANTHER" id="PTHR28090">
    <property type="entry name" value="PROTEIN ROT1"/>
    <property type="match status" value="1"/>
</dbReference>
<dbReference type="PANTHER" id="PTHR28090:SF1">
    <property type="entry name" value="PROTEIN ROT1"/>
    <property type="match status" value="1"/>
</dbReference>
<dbReference type="Pfam" id="PF10681">
    <property type="entry name" value="Rot1"/>
    <property type="match status" value="1"/>
</dbReference>
<dbReference type="PIRSF" id="PIRSF017290">
    <property type="entry name" value="ROT1_prd"/>
    <property type="match status" value="1"/>
</dbReference>
<organism>
    <name type="scientific">Candida albicans (strain SC5314 / ATCC MYA-2876)</name>
    <name type="common">Yeast</name>
    <dbReference type="NCBI Taxonomy" id="237561"/>
    <lineage>
        <taxon>Eukaryota</taxon>
        <taxon>Fungi</taxon>
        <taxon>Dikarya</taxon>
        <taxon>Ascomycota</taxon>
        <taxon>Saccharomycotina</taxon>
        <taxon>Pichiomycetes</taxon>
        <taxon>Debaryomycetaceae</taxon>
        <taxon>Candida/Lodderomyces clade</taxon>
        <taxon>Candida</taxon>
    </lineage>
</organism>
<proteinExistence type="inferred from homology"/>
<gene>
    <name type="primary">ROT1</name>
    <name type="ordered locus">CAALFM_C100770CA</name>
    <name type="ORF">CaO19.13450</name>
    <name type="ORF">CaO19.6029</name>
</gene>
<feature type="signal peptide" evidence="2">
    <location>
        <begin position="1"/>
        <end position="24"/>
    </location>
</feature>
<feature type="chain" id="PRO_0000333407" description="Protein ROT1">
    <location>
        <begin position="25"/>
        <end position="260"/>
    </location>
</feature>
<feature type="topological domain" description="Lumenal" evidence="2">
    <location>
        <begin position="25"/>
        <end position="240"/>
    </location>
</feature>
<feature type="transmembrane region" description="Helical" evidence="2">
    <location>
        <begin position="241"/>
        <end position="258"/>
    </location>
</feature>
<feature type="topological domain" description="Cytoplasmic" evidence="2">
    <location>
        <begin position="259"/>
        <end position="260"/>
    </location>
</feature>
<feature type="glycosylation site" description="N-linked (GlcNAc...) asparagine" evidence="2">
    <location>
        <position position="87"/>
    </location>
</feature>
<feature type="glycosylation site" description="N-linked (GlcNAc...) asparagine" evidence="2">
    <location>
        <position position="107"/>
    </location>
</feature>
<comment type="function">
    <text evidence="1">Required for normal levels of the cell wall 1,6-beta-glucan. Involved in a protein folding machinery chaperoning proteins acting in various physiological processes including cell wall synthesis and lysis of autophagic bodies (By similarity).</text>
</comment>
<comment type="subcellular location">
    <subcellularLocation>
        <location evidence="1">Endoplasmic reticulum membrane</location>
        <topology evidence="1">Single-pass type I membrane protein</topology>
    </subcellularLocation>
</comment>
<comment type="similarity">
    <text evidence="3">Belongs to the ROT1 family.</text>
</comment>
<keyword id="KW-0256">Endoplasmic reticulum</keyword>
<keyword id="KW-0325">Glycoprotein</keyword>
<keyword id="KW-0472">Membrane</keyword>
<keyword id="KW-1185">Reference proteome</keyword>
<keyword id="KW-0732">Signal</keyword>
<keyword id="KW-0812">Transmembrane</keyword>
<keyword id="KW-1133">Transmembrane helix</keyword>
<sequence>MIFSRYFIPIILTLLTSSPLFVDADPNMEELEGTWSSKSNTVFTGPGFYDPVEELLIEPDLPGICYSFTKDGHYEEALYRVKPNPKNHSCAVASVTYQHGKYELLSNGSLVLTPIAVDGRQLLSDPCNSEDPSKSTYTRYVQSTWFKTYQVYVDSYHGRWTLQIYQFDGSKMQPLYLAYKPPVMLPTIALNPTDEASETASTLGSVSHKIKRSRMRIKRSLENQYRTNAKREIYTEKFDKIWWSSVFCLALASSYFFLKR</sequence>
<evidence type="ECO:0000250" key="1"/>
<evidence type="ECO:0000255" key="2"/>
<evidence type="ECO:0000305" key="3"/>
<name>ROT1_CANAL</name>
<accession>Q5ABP8</accession>
<accession>A0A1D8PCA1</accession>
<accession>Q5ABE1</accession>
<protein>
    <recommendedName>
        <fullName>Protein ROT1</fullName>
    </recommendedName>
</protein>
<reference key="1">
    <citation type="journal article" date="2004" name="Proc. Natl. Acad. Sci. U.S.A.">
        <title>The diploid genome sequence of Candida albicans.</title>
        <authorList>
            <person name="Jones T."/>
            <person name="Federspiel N.A."/>
            <person name="Chibana H."/>
            <person name="Dungan J."/>
            <person name="Kalman S."/>
            <person name="Magee B.B."/>
            <person name="Newport G."/>
            <person name="Thorstenson Y.R."/>
            <person name="Agabian N."/>
            <person name="Magee P.T."/>
            <person name="Davis R.W."/>
            <person name="Scherer S."/>
        </authorList>
    </citation>
    <scope>NUCLEOTIDE SEQUENCE [LARGE SCALE GENOMIC DNA]</scope>
    <source>
        <strain>SC5314 / ATCC MYA-2876</strain>
    </source>
</reference>
<reference key="2">
    <citation type="journal article" date="2007" name="Genome Biol.">
        <title>Assembly of the Candida albicans genome into sixteen supercontigs aligned on the eight chromosomes.</title>
        <authorList>
            <person name="van het Hoog M."/>
            <person name="Rast T.J."/>
            <person name="Martchenko M."/>
            <person name="Grindle S."/>
            <person name="Dignard D."/>
            <person name="Hogues H."/>
            <person name="Cuomo C."/>
            <person name="Berriman M."/>
            <person name="Scherer S."/>
            <person name="Magee B.B."/>
            <person name="Whiteway M."/>
            <person name="Chibana H."/>
            <person name="Nantel A."/>
            <person name="Magee P.T."/>
        </authorList>
    </citation>
    <scope>GENOME REANNOTATION</scope>
    <source>
        <strain>SC5314 / ATCC MYA-2876</strain>
    </source>
</reference>
<reference key="3">
    <citation type="journal article" date="2013" name="Genome Biol.">
        <title>Assembly of a phased diploid Candida albicans genome facilitates allele-specific measurements and provides a simple model for repeat and indel structure.</title>
        <authorList>
            <person name="Muzzey D."/>
            <person name="Schwartz K."/>
            <person name="Weissman J.S."/>
            <person name="Sherlock G."/>
        </authorList>
    </citation>
    <scope>NUCLEOTIDE SEQUENCE [LARGE SCALE GENOMIC DNA]</scope>
    <scope>GENOME REANNOTATION</scope>
    <source>
        <strain>SC5314 / ATCC MYA-2876</strain>
    </source>
</reference>